<evidence type="ECO:0000255" key="1">
    <source>
        <dbReference type="HAMAP-Rule" id="MF_03144"/>
    </source>
</evidence>
<name>RTCB_BRAFL</name>
<keyword id="KW-0342">GTP-binding</keyword>
<keyword id="KW-0436">Ligase</keyword>
<keyword id="KW-0464">Manganese</keyword>
<keyword id="KW-0479">Metal-binding</keyword>
<keyword id="KW-0547">Nucleotide-binding</keyword>
<keyword id="KW-1185">Reference proteome</keyword>
<keyword id="KW-0819">tRNA processing</keyword>
<sequence length="507" mass="55759">MPENRSYNDELNFLDKIDANTWRIKKGFVPNMKVDGFFYVNDLLEKLMFDELRQHSRAAGFGGFLPAMKQIANVAALPGIVQKSVGLPDVHAGYGFAIGNLAAFDMSNPEAVVSPGGVGFDINCGVRLLRTNLDERDVQPVKDELAQAMFDHIPVGVGSKGVIPMGARDLEEALEMGVDWSLREGYAWAEDKEHCEEYGRMLNADQSAVGSKAKKRGLPQLGTLGAGNHYAEIQVVDEIFDDYASQRMGIDHKGQVVVMIHSGSRGFGHQVATDALVAMEKAMKRDKVLTNDRQLACARIHSPEGQEYLKGMACAANFAWVNRSSMTFLSRQAFAKVFNTTPDDLDMQLIYDVSHNIAKMEEHISFQLSTTLLVHRKGSTRAFPPHHPLIPVDYQLSGQPVLIGGTMGTCSYVLTGTEKGMEQTFGTTCHGAGRAWSRAKSRRNLDYQEVLDRLAELGISIRVASPKLVMEEAPESYKNVTDVVNTCHAVGISKKAIKLRPIAVIKG</sequence>
<comment type="function">
    <text evidence="1">Catalytic subunit of the tRNA-splicing ligase complex that acts by directly joining spliced tRNA halves to mature-sized tRNAs by incorporating the precursor-derived splice junction phosphate into the mature tRNA as a canonical 3',5'-phosphodiester. May act as an RNA ligase with broad substrate specificity, and may function toward other RNAs.</text>
</comment>
<comment type="catalytic activity">
    <reaction evidence="1">
        <text>a 3'-end 3'-phospho-ribonucleotide-RNA + a 5'-end dephospho-ribonucleoside-RNA + GTP = a ribonucleotidyl-ribonucleotide-RNA + GMP + diphosphate</text>
        <dbReference type="Rhea" id="RHEA:68076"/>
        <dbReference type="Rhea" id="RHEA-COMP:10463"/>
        <dbReference type="Rhea" id="RHEA-COMP:13936"/>
        <dbReference type="Rhea" id="RHEA-COMP:17355"/>
        <dbReference type="ChEBI" id="CHEBI:33019"/>
        <dbReference type="ChEBI" id="CHEBI:37565"/>
        <dbReference type="ChEBI" id="CHEBI:58115"/>
        <dbReference type="ChEBI" id="CHEBI:83062"/>
        <dbReference type="ChEBI" id="CHEBI:138284"/>
        <dbReference type="ChEBI" id="CHEBI:173118"/>
        <dbReference type="EC" id="6.5.1.8"/>
    </reaction>
</comment>
<comment type="catalytic activity">
    <reaction evidence="1">
        <text>a 3'-end 2',3'-cyclophospho-ribonucleotide-RNA + a 5'-end dephospho-ribonucleoside-RNA + GTP + H2O = a ribonucleotidyl-ribonucleotide-RNA + GMP + diphosphate + H(+)</text>
        <dbReference type="Rhea" id="RHEA:68080"/>
        <dbReference type="Rhea" id="RHEA-COMP:10464"/>
        <dbReference type="Rhea" id="RHEA-COMP:13936"/>
        <dbReference type="Rhea" id="RHEA-COMP:17355"/>
        <dbReference type="ChEBI" id="CHEBI:15377"/>
        <dbReference type="ChEBI" id="CHEBI:15378"/>
        <dbReference type="ChEBI" id="CHEBI:33019"/>
        <dbReference type="ChEBI" id="CHEBI:37565"/>
        <dbReference type="ChEBI" id="CHEBI:58115"/>
        <dbReference type="ChEBI" id="CHEBI:83064"/>
        <dbReference type="ChEBI" id="CHEBI:138284"/>
        <dbReference type="ChEBI" id="CHEBI:173118"/>
        <dbReference type="EC" id="6.5.1.8"/>
    </reaction>
</comment>
<comment type="cofactor">
    <cofactor evidence="1">
        <name>Mn(2+)</name>
        <dbReference type="ChEBI" id="CHEBI:29035"/>
    </cofactor>
    <text evidence="1">Binds 2 manganese ions per subunit.</text>
</comment>
<comment type="subunit">
    <text evidence="1">Catalytic component of the tRNA-splicing ligase complex.</text>
</comment>
<comment type="miscellaneous">
    <text evidence="1">Ligation probably proceeds through 3 nucleotidyl transfer steps, with 2',3'-cyclic phosphate termini being hydrolyzed to 3'-P termini in a step that precedes 3'-P activation with GMP. In the first nucleotidyl transfer step, RTCB reacts with GTP to form a covalent RTCB-histidine-GMP intermediate with release of PPi; in the second step, the GMP moiety is transferred to the RNA 3'-P; in the third step, the 5'-OH from the opposite RNA strand attacks the activated 3'-P to form a 3',5'-phosphodiester bond and release GMP.</text>
</comment>
<comment type="similarity">
    <text evidence="1">Belongs to the RtcB family.</text>
</comment>
<protein>
    <recommendedName>
        <fullName evidence="1">RNA-splicing ligase RtcB homolog</fullName>
        <ecNumber evidence="1">6.5.1.8</ecNumber>
    </recommendedName>
    <alternativeName>
        <fullName evidence="1">3'-phosphate/5'-hydroxy nucleic acid ligase</fullName>
    </alternativeName>
</protein>
<proteinExistence type="inferred from homology"/>
<accession>C3YN79</accession>
<gene>
    <name type="ORF">BRAFLDRAFT_216547</name>
</gene>
<reference key="1">
    <citation type="journal article" date="2008" name="Nature">
        <title>The amphioxus genome and the evolution of the chordate karyotype.</title>
        <authorList>
            <person name="Putnam N.H."/>
            <person name="Butts T."/>
            <person name="Ferrier D.E.K."/>
            <person name="Furlong R.F."/>
            <person name="Hellsten U."/>
            <person name="Kawashima T."/>
            <person name="Robinson-Rechavi M."/>
            <person name="Shoguchi E."/>
            <person name="Terry A."/>
            <person name="Yu J.-K."/>
            <person name="Benito-Gutierrez E.L."/>
            <person name="Dubchak I."/>
            <person name="Garcia-Fernandez J."/>
            <person name="Gibson-Brown J.J."/>
            <person name="Grigoriev I.V."/>
            <person name="Horton A.C."/>
            <person name="de Jong P.J."/>
            <person name="Jurka J."/>
            <person name="Kapitonov V.V."/>
            <person name="Kohara Y."/>
            <person name="Kuroki Y."/>
            <person name="Lindquist E."/>
            <person name="Lucas S."/>
            <person name="Osoegawa K."/>
            <person name="Pennacchio L.A."/>
            <person name="Salamov A.A."/>
            <person name="Satou Y."/>
            <person name="Sauka-Spengler T."/>
            <person name="Schmutz J."/>
            <person name="Shin-I T."/>
            <person name="Toyoda A."/>
            <person name="Bronner-Fraser M."/>
            <person name="Fujiyama A."/>
            <person name="Holland L.Z."/>
            <person name="Holland P.W.H."/>
            <person name="Satoh N."/>
            <person name="Rokhsar D.S."/>
        </authorList>
    </citation>
    <scope>NUCLEOTIDE SEQUENCE [LARGE SCALE GENOMIC DNA]</scope>
    <source>
        <strain>S238N-H82</strain>
        <tissue>Testis</tissue>
    </source>
</reference>
<organism>
    <name type="scientific">Branchiostoma floridae</name>
    <name type="common">Florida lancelet</name>
    <name type="synonym">Amphioxus</name>
    <dbReference type="NCBI Taxonomy" id="7739"/>
    <lineage>
        <taxon>Eukaryota</taxon>
        <taxon>Metazoa</taxon>
        <taxon>Chordata</taxon>
        <taxon>Cephalochordata</taxon>
        <taxon>Leptocardii</taxon>
        <taxon>Amphioxiformes</taxon>
        <taxon>Branchiostomatidae</taxon>
        <taxon>Branchiostoma</taxon>
    </lineage>
</organism>
<dbReference type="EC" id="6.5.1.8" evidence="1"/>
<dbReference type="EMBL" id="GG666533">
    <property type="protein sequence ID" value="EEN58185.1"/>
    <property type="molecule type" value="Genomic_DNA"/>
</dbReference>
<dbReference type="RefSeq" id="XP_002602173.1">
    <property type="nucleotide sequence ID" value="XM_002602127.1"/>
</dbReference>
<dbReference type="SMR" id="C3YN79"/>
<dbReference type="FunCoup" id="C3YN79">
    <property type="interactions" value="600"/>
</dbReference>
<dbReference type="STRING" id="7739.C3YN79"/>
<dbReference type="eggNOG" id="KOG3833">
    <property type="taxonomic scope" value="Eukaryota"/>
</dbReference>
<dbReference type="InParanoid" id="C3YN79"/>
<dbReference type="Proteomes" id="UP000001554">
    <property type="component" value="Unplaced"/>
</dbReference>
<dbReference type="GO" id="GO:0005634">
    <property type="term" value="C:nucleus"/>
    <property type="evidence" value="ECO:0000318"/>
    <property type="project" value="GO_Central"/>
</dbReference>
<dbReference type="GO" id="GO:0072669">
    <property type="term" value="C:tRNA-splicing ligase complex"/>
    <property type="evidence" value="ECO:0000318"/>
    <property type="project" value="GO_Central"/>
</dbReference>
<dbReference type="GO" id="GO:0005525">
    <property type="term" value="F:GTP binding"/>
    <property type="evidence" value="ECO:0007669"/>
    <property type="project" value="UniProtKB-KW"/>
</dbReference>
<dbReference type="GO" id="GO:0046872">
    <property type="term" value="F:metal ion binding"/>
    <property type="evidence" value="ECO:0007669"/>
    <property type="project" value="UniProtKB-KW"/>
</dbReference>
<dbReference type="GO" id="GO:0170057">
    <property type="term" value="F:RNA ligase (GTP) activity"/>
    <property type="evidence" value="ECO:0007669"/>
    <property type="project" value="UniProtKB-EC"/>
</dbReference>
<dbReference type="GO" id="GO:0006388">
    <property type="term" value="P:tRNA splicing, via endonucleolytic cleavage and ligation"/>
    <property type="evidence" value="ECO:0000318"/>
    <property type="project" value="GO_Central"/>
</dbReference>
<dbReference type="FunFam" id="3.90.1860.10:FF:000001">
    <property type="entry name" value="tRNA-splicing ligase RtcB homolog"/>
    <property type="match status" value="1"/>
</dbReference>
<dbReference type="Gene3D" id="3.90.1860.10">
    <property type="entry name" value="tRNA-splicing ligase RtcB"/>
    <property type="match status" value="1"/>
</dbReference>
<dbReference type="HAMAP" id="MF_03144">
    <property type="entry name" value="RtcB_euk"/>
    <property type="match status" value="1"/>
</dbReference>
<dbReference type="InterPro" id="IPR001233">
    <property type="entry name" value="RtcB"/>
</dbReference>
<dbReference type="InterPro" id="IPR036025">
    <property type="entry name" value="RtcB-like_sf"/>
</dbReference>
<dbReference type="InterPro" id="IPR027513">
    <property type="entry name" value="RtcB_euk"/>
</dbReference>
<dbReference type="PANTHER" id="PTHR11118">
    <property type="entry name" value="RNA-SPLICING LIGASE RTCB HOMOLOG"/>
    <property type="match status" value="1"/>
</dbReference>
<dbReference type="PANTHER" id="PTHR11118:SF1">
    <property type="entry name" value="RNA-SPLICING LIGASE RTCB HOMOLOG"/>
    <property type="match status" value="1"/>
</dbReference>
<dbReference type="Pfam" id="PF01139">
    <property type="entry name" value="RtcB"/>
    <property type="match status" value="1"/>
</dbReference>
<dbReference type="SUPFAM" id="SSF103365">
    <property type="entry name" value="Hypothetical protein PH1602"/>
    <property type="match status" value="1"/>
</dbReference>
<dbReference type="PROSITE" id="PS01288">
    <property type="entry name" value="UPF0027"/>
    <property type="match status" value="1"/>
</dbReference>
<feature type="chain" id="PRO_0000407221" description="RNA-splicing ligase RtcB homolog">
    <location>
        <begin position="1"/>
        <end position="507"/>
    </location>
</feature>
<feature type="active site" description="GMP-histidine intermediate" evidence="1">
    <location>
        <position position="430"/>
    </location>
</feature>
<feature type="binding site" evidence="1">
    <location>
        <position position="121"/>
    </location>
    <ligand>
        <name>Mn(2+)</name>
        <dbReference type="ChEBI" id="CHEBI:29035"/>
        <label>1</label>
    </ligand>
</feature>
<feature type="binding site" evidence="1">
    <location>
        <position position="124"/>
    </location>
    <ligand>
        <name>Mn(2+)</name>
        <dbReference type="ChEBI" id="CHEBI:29035"/>
        <label>1</label>
    </ligand>
</feature>
<feature type="binding site" evidence="1">
    <location>
        <position position="124"/>
    </location>
    <ligand>
        <name>Mn(2+)</name>
        <dbReference type="ChEBI" id="CHEBI:29035"/>
        <label>2</label>
    </ligand>
</feature>
<feature type="binding site" evidence="1">
    <location>
        <begin position="228"/>
        <end position="232"/>
    </location>
    <ligand>
        <name>GMP</name>
        <dbReference type="ChEBI" id="CHEBI:58115"/>
    </ligand>
</feature>
<feature type="binding site" evidence="1">
    <location>
        <position position="229"/>
    </location>
    <ligand>
        <name>Mn(2+)</name>
        <dbReference type="ChEBI" id="CHEBI:29035"/>
        <label>1</label>
    </ligand>
</feature>
<feature type="binding site" evidence="1">
    <location>
        <position position="261"/>
    </location>
    <ligand>
        <name>Mn(2+)</name>
        <dbReference type="ChEBI" id="CHEBI:29035"/>
        <label>2</label>
    </ligand>
</feature>
<feature type="binding site" evidence="1">
    <location>
        <begin position="355"/>
        <end position="356"/>
    </location>
    <ligand>
        <name>GMP</name>
        <dbReference type="ChEBI" id="CHEBI:58115"/>
    </ligand>
</feature>
<feature type="binding site" evidence="1">
    <location>
        <position position="355"/>
    </location>
    <ligand>
        <name>Mn(2+)</name>
        <dbReference type="ChEBI" id="CHEBI:29035"/>
        <label>2</label>
    </ligand>
</feature>
<feature type="binding site" evidence="1">
    <location>
        <begin position="404"/>
        <end position="407"/>
    </location>
    <ligand>
        <name>GMP</name>
        <dbReference type="ChEBI" id="CHEBI:58115"/>
    </ligand>
</feature>
<feature type="binding site" evidence="1">
    <location>
        <position position="411"/>
    </location>
    <ligand>
        <name>GMP</name>
        <dbReference type="ChEBI" id="CHEBI:58115"/>
    </ligand>
</feature>
<feature type="binding site" evidence="1">
    <location>
        <begin position="430"/>
        <end position="433"/>
    </location>
    <ligand>
        <name>GMP</name>
        <dbReference type="ChEBI" id="CHEBI:58115"/>
    </ligand>
</feature>
<feature type="binding site" evidence="1">
    <location>
        <position position="506"/>
    </location>
    <ligand>
        <name>GMP</name>
        <dbReference type="ChEBI" id="CHEBI:58115"/>
    </ligand>
</feature>